<keyword id="KW-0997">Cell inner membrane</keyword>
<keyword id="KW-1003">Cell membrane</keyword>
<keyword id="KW-0998">Cell outer membrane</keyword>
<keyword id="KW-0378">Hydrolase</keyword>
<keyword id="KW-0442">Lipid degradation</keyword>
<keyword id="KW-0443">Lipid metabolism</keyword>
<keyword id="KW-0472">Membrane</keyword>
<keyword id="KW-0595">Phospholipid degradation</keyword>
<keyword id="KW-1208">Phospholipid metabolism</keyword>
<keyword id="KW-1185">Reference proteome</keyword>
<keyword id="KW-0812">Transmembrane</keyword>
<keyword id="KW-1133">Transmembrane helix</keyword>
<organism>
    <name type="scientific">Haemophilus influenzae (strain ATCC 51907 / DSM 11121 / KW20 / Rd)</name>
    <dbReference type="NCBI Taxonomy" id="71421"/>
    <lineage>
        <taxon>Bacteria</taxon>
        <taxon>Pseudomonadati</taxon>
        <taxon>Pseudomonadota</taxon>
        <taxon>Gammaproteobacteria</taxon>
        <taxon>Pasteurellales</taxon>
        <taxon>Pasteurellaceae</taxon>
        <taxon>Haemophilus</taxon>
    </lineage>
</organism>
<dbReference type="EC" id="3.1.3.27"/>
<dbReference type="EC" id="3.6.1.75"/>
<dbReference type="EC" id="3.1.3.4"/>
<dbReference type="EC" id="3.6.1.27"/>
<dbReference type="EMBL" id="L42023">
    <property type="protein sequence ID" value="AAC21879.1"/>
    <property type="molecule type" value="Genomic_DNA"/>
</dbReference>
<dbReference type="PIR" id="I64054">
    <property type="entry name" value="I64054"/>
</dbReference>
<dbReference type="RefSeq" id="NP_438379.1">
    <property type="nucleotide sequence ID" value="NC_000907.1"/>
</dbReference>
<dbReference type="SMR" id="P44570"/>
<dbReference type="STRING" id="71421.HI_0211"/>
<dbReference type="EnsemblBacteria" id="AAC21879">
    <property type="protein sequence ID" value="AAC21879"/>
    <property type="gene ID" value="HI_0211"/>
</dbReference>
<dbReference type="KEGG" id="hin:HI_0211"/>
<dbReference type="PATRIC" id="fig|71421.8.peg.215"/>
<dbReference type="eggNOG" id="COG0671">
    <property type="taxonomic scope" value="Bacteria"/>
</dbReference>
<dbReference type="HOGENOM" id="CLU_083863_0_0_6"/>
<dbReference type="OrthoDB" id="5586741at2"/>
<dbReference type="PhylomeDB" id="P44570"/>
<dbReference type="BioCyc" id="HINF71421:G1GJ1-221-MONOMER"/>
<dbReference type="UniPathway" id="UPA00084">
    <property type="reaction ID" value="UER00504"/>
</dbReference>
<dbReference type="Proteomes" id="UP000000579">
    <property type="component" value="Chromosome"/>
</dbReference>
<dbReference type="GO" id="GO:0009279">
    <property type="term" value="C:cell outer membrane"/>
    <property type="evidence" value="ECO:0007669"/>
    <property type="project" value="UniProtKB-SubCell"/>
</dbReference>
<dbReference type="GO" id="GO:0005886">
    <property type="term" value="C:plasma membrane"/>
    <property type="evidence" value="ECO:0000318"/>
    <property type="project" value="GO_Central"/>
</dbReference>
<dbReference type="GO" id="GO:0000810">
    <property type="term" value="F:diacylglycerol diphosphate phosphatase activity"/>
    <property type="evidence" value="ECO:0007669"/>
    <property type="project" value="RHEA"/>
</dbReference>
<dbReference type="GO" id="GO:0008195">
    <property type="term" value="F:phosphatidate phosphatase activity"/>
    <property type="evidence" value="ECO:0007669"/>
    <property type="project" value="UniProtKB-EC"/>
</dbReference>
<dbReference type="GO" id="GO:0008962">
    <property type="term" value="F:phosphatidylglycerophosphatase activity"/>
    <property type="evidence" value="ECO:0007669"/>
    <property type="project" value="UniProtKB-EC"/>
</dbReference>
<dbReference type="GO" id="GO:0050380">
    <property type="term" value="F:undecaprenyl-diphosphatase activity"/>
    <property type="evidence" value="ECO:0007669"/>
    <property type="project" value="UniProtKB-EC"/>
</dbReference>
<dbReference type="GO" id="GO:0006655">
    <property type="term" value="P:phosphatidylglycerol biosynthetic process"/>
    <property type="evidence" value="ECO:0007669"/>
    <property type="project" value="UniProtKB-UniPathway"/>
</dbReference>
<dbReference type="GO" id="GO:0009395">
    <property type="term" value="P:phospholipid catabolic process"/>
    <property type="evidence" value="ECO:0007669"/>
    <property type="project" value="UniProtKB-KW"/>
</dbReference>
<dbReference type="CDD" id="cd01610">
    <property type="entry name" value="PAP2_like"/>
    <property type="match status" value="1"/>
</dbReference>
<dbReference type="Gene3D" id="1.20.144.10">
    <property type="entry name" value="Phosphatidic acid phosphatase type 2/haloperoxidase"/>
    <property type="match status" value="1"/>
</dbReference>
<dbReference type="InterPro" id="IPR036938">
    <property type="entry name" value="P_Acid_Pase_2/haloperoxi_sf"/>
</dbReference>
<dbReference type="InterPro" id="IPR000326">
    <property type="entry name" value="P_Acid_Pase_2/haloperoxidase"/>
</dbReference>
<dbReference type="PANTHER" id="PTHR14969:SF54">
    <property type="entry name" value="PHOSPHATIDYLGLYCEROPHOSPHATASE B"/>
    <property type="match status" value="1"/>
</dbReference>
<dbReference type="PANTHER" id="PTHR14969">
    <property type="entry name" value="SPHINGOSINE-1-PHOSPHATE PHOSPHOHYDROLASE"/>
    <property type="match status" value="1"/>
</dbReference>
<dbReference type="Pfam" id="PF01569">
    <property type="entry name" value="PAP2"/>
    <property type="match status" value="1"/>
</dbReference>
<dbReference type="SMART" id="SM00014">
    <property type="entry name" value="acidPPc"/>
    <property type="match status" value="1"/>
</dbReference>
<dbReference type="SUPFAM" id="SSF48317">
    <property type="entry name" value="Acid phosphatase/Vanadium-dependent haloperoxidase"/>
    <property type="match status" value="1"/>
</dbReference>
<sequence length="241" mass="27491">MFKRLSLYTLLLCLVPFFIWGISYQWHGNSQLTQADYWLYLLTETGSVPYALITCVLFTLLFAFLFKNPKQWILGVIVMGISVIATQAAKTGAKALFEEPRPFTVYLAEQTHSTPENFYKNDRTLRAEIAKNFYSMDAITPAWLVHHYENETGYSFPSGHTIFAATWLMLAVGFTQLLGNRSFKAKLLVVGIAVWGLLMLISRVRLGMHYPIDLLVATLLAWLINSIIFAFLKKKAIFVMK</sequence>
<feature type="chain" id="PRO_0000058363" description="Phosphatidylglycerophosphatase B">
    <location>
        <begin position="1"/>
        <end position="241"/>
    </location>
</feature>
<feature type="transmembrane region" description="Helical" evidence="2">
    <location>
        <begin position="1"/>
        <end position="21"/>
    </location>
</feature>
<feature type="topological domain" description="Periplasmic" evidence="2">
    <location>
        <begin position="22"/>
        <end position="52"/>
    </location>
</feature>
<feature type="transmembrane region" description="Helical" evidence="2">
    <location>
        <begin position="53"/>
        <end position="62"/>
    </location>
</feature>
<feature type="topological domain" description="Cytoplasmic" evidence="2">
    <location>
        <begin position="63"/>
        <end position="67"/>
    </location>
</feature>
<feature type="transmembrane region" description="Helical" evidence="2">
    <location>
        <begin position="68"/>
        <end position="91"/>
    </location>
</feature>
<feature type="topological domain" description="Periplasmic" evidence="2">
    <location>
        <begin position="92"/>
        <end position="158"/>
    </location>
</feature>
<feature type="transmembrane region" description="Helical" evidence="2">
    <location>
        <begin position="159"/>
        <end position="173"/>
    </location>
</feature>
<feature type="topological domain" description="Cytoplasmic" evidence="2">
    <location>
        <begin position="174"/>
        <end position="184"/>
    </location>
</feature>
<feature type="transmembrane region" description="Helical" evidence="2">
    <location>
        <begin position="185"/>
        <end position="204"/>
    </location>
</feature>
<feature type="topological domain" description="Periplasmic" evidence="2">
    <location>
        <begin position="205"/>
        <end position="210"/>
    </location>
</feature>
<feature type="transmembrane region" description="Helical" evidence="2">
    <location>
        <begin position="211"/>
        <end position="235"/>
    </location>
</feature>
<feature type="topological domain" description="Cytoplasmic" evidence="2">
    <location>
        <begin position="236"/>
        <end position="241"/>
    </location>
</feature>
<feature type="region of interest" description="Phosphatase sequence motif I" evidence="3">
    <location>
        <begin position="94"/>
        <end position="102"/>
    </location>
</feature>
<feature type="region of interest" description="Phosphatase sequence motif II" evidence="3">
    <location>
        <begin position="157"/>
        <end position="160"/>
    </location>
</feature>
<feature type="region of interest" description="Phosphatase sequence motif III" evidence="3">
    <location>
        <begin position="202"/>
        <end position="213"/>
    </location>
</feature>
<feature type="active site" description="Proton donor; for a subset of substrates" evidence="2">
    <location>
        <position position="160"/>
    </location>
</feature>
<feature type="active site" description="Nucleophile" evidence="2">
    <location>
        <position position="209"/>
    </location>
</feature>
<feature type="site" description="Stabilizes the active site histidine for nucleophilic attack" evidence="2">
    <location>
        <position position="213"/>
    </location>
</feature>
<comment type="function">
    <text evidence="1">Catalyzes the dephosphorylation of diacylglycerol diphosphate (DGPP) to phosphatidate (PA) and the subsequent dephosphorylation of PA to diacylglycerol (DAG). Also has undecaprenyl pyrophosphate phosphatase activity, required for the biosynthesis of the lipid carrier undecaprenyl phosphate. Can also use lysophosphatidic acid (LPA) and phosphatidylglycerophosphate as substrates. The pattern of activities varies according to subcellular location, PGP phosphatase activity is higher in the cytoplasmic membrane, whereas PA and LPA phosphatase activities are higher in the outer membrane. Activity is independent of a divalent cation ion and insensitive to inhibition by N-ethylmaleimide (By similarity).</text>
</comment>
<comment type="catalytic activity">
    <reaction>
        <text>a 1,2-diacyl-sn-glycero-3-phospho-(1'-sn-glycero-3'-phosphate) + H2O = a 1,2-diacyl-sn-glycero-3-phospho-(1'-sn-glycerol) + phosphate</text>
        <dbReference type="Rhea" id="RHEA:33751"/>
        <dbReference type="ChEBI" id="CHEBI:15377"/>
        <dbReference type="ChEBI" id="CHEBI:43474"/>
        <dbReference type="ChEBI" id="CHEBI:60110"/>
        <dbReference type="ChEBI" id="CHEBI:64716"/>
        <dbReference type="EC" id="3.1.3.27"/>
    </reaction>
</comment>
<comment type="catalytic activity">
    <reaction>
        <text>a 1,2-diacyl-sn-glycerol 3-diphosphate + H2O = a 1,2-diacyl-sn-glycero-3-phosphate + phosphate + H(+)</text>
        <dbReference type="Rhea" id="RHEA:27449"/>
        <dbReference type="ChEBI" id="CHEBI:15377"/>
        <dbReference type="ChEBI" id="CHEBI:15378"/>
        <dbReference type="ChEBI" id="CHEBI:43474"/>
        <dbReference type="ChEBI" id="CHEBI:58608"/>
        <dbReference type="ChEBI" id="CHEBI:59996"/>
        <dbReference type="EC" id="3.6.1.75"/>
    </reaction>
</comment>
<comment type="catalytic activity">
    <reaction>
        <text>a 1,2-diacyl-sn-glycero-3-phosphate + H2O = a 1,2-diacyl-sn-glycerol + phosphate</text>
        <dbReference type="Rhea" id="RHEA:27429"/>
        <dbReference type="ChEBI" id="CHEBI:15377"/>
        <dbReference type="ChEBI" id="CHEBI:17815"/>
        <dbReference type="ChEBI" id="CHEBI:43474"/>
        <dbReference type="ChEBI" id="CHEBI:58608"/>
        <dbReference type="EC" id="3.1.3.4"/>
    </reaction>
</comment>
<comment type="catalytic activity">
    <reaction>
        <text>di-trans,octa-cis-undecaprenyl diphosphate + H2O = di-trans,octa-cis-undecaprenyl phosphate + phosphate + H(+)</text>
        <dbReference type="Rhea" id="RHEA:28094"/>
        <dbReference type="ChEBI" id="CHEBI:15377"/>
        <dbReference type="ChEBI" id="CHEBI:15378"/>
        <dbReference type="ChEBI" id="CHEBI:43474"/>
        <dbReference type="ChEBI" id="CHEBI:58405"/>
        <dbReference type="ChEBI" id="CHEBI:60392"/>
        <dbReference type="EC" id="3.6.1.27"/>
    </reaction>
</comment>
<comment type="pathway">
    <text>Phospholipid metabolism; phosphatidylglycerol biosynthesis; phosphatidylglycerol from CDP-diacylglycerol: step 2/2.</text>
</comment>
<comment type="subcellular location">
    <subcellularLocation>
        <location evidence="1">Cell inner membrane</location>
        <topology evidence="1">Multi-pass membrane protein</topology>
    </subcellularLocation>
    <subcellularLocation>
        <location evidence="1">Cell outer membrane</location>
        <topology evidence="1">Multi-pass membrane protein</topology>
    </subcellularLocation>
</comment>
<comment type="similarity">
    <text evidence="3">Belongs to the PA-phosphatase related phosphoesterase family.</text>
</comment>
<gene>
    <name type="primary">pgpB</name>
    <name type="ordered locus">HI_0211</name>
</gene>
<evidence type="ECO:0000250" key="1"/>
<evidence type="ECO:0000250" key="2">
    <source>
        <dbReference type="UniProtKB" id="P0A924"/>
    </source>
</evidence>
<evidence type="ECO:0000305" key="3"/>
<protein>
    <recommendedName>
        <fullName>Phosphatidylglycerophosphatase B</fullName>
        <ecNumber>3.1.3.27</ecNumber>
    </recommendedName>
    <alternativeName>
        <fullName>Diacylglycerol pyrophosphate phosphatase</fullName>
        <shortName>DGPP phosphatase</shortName>
        <ecNumber>3.6.1.75</ecNumber>
    </alternativeName>
    <alternativeName>
        <fullName>Phosphatidate phosphatase</fullName>
        <ecNumber>3.1.3.4</ecNumber>
    </alternativeName>
    <alternativeName>
        <fullName>Undecaprenyl pyrophosphate phosphatase</fullName>
        <ecNumber>3.6.1.27</ecNumber>
    </alternativeName>
    <alternativeName>
        <fullName>Undecaprenyl-diphosphatase</fullName>
    </alternativeName>
</protein>
<accession>P44570</accession>
<reference key="1">
    <citation type="journal article" date="1995" name="Science">
        <title>Whole-genome random sequencing and assembly of Haemophilus influenzae Rd.</title>
        <authorList>
            <person name="Fleischmann R.D."/>
            <person name="Adams M.D."/>
            <person name="White O."/>
            <person name="Clayton R.A."/>
            <person name="Kirkness E.F."/>
            <person name="Kerlavage A.R."/>
            <person name="Bult C.J."/>
            <person name="Tomb J.-F."/>
            <person name="Dougherty B.A."/>
            <person name="Merrick J.M."/>
            <person name="McKenney K."/>
            <person name="Sutton G.G."/>
            <person name="FitzHugh W."/>
            <person name="Fields C.A."/>
            <person name="Gocayne J.D."/>
            <person name="Scott J.D."/>
            <person name="Shirley R."/>
            <person name="Liu L.-I."/>
            <person name="Glodek A."/>
            <person name="Kelley J.M."/>
            <person name="Weidman J.F."/>
            <person name="Phillips C.A."/>
            <person name="Spriggs T."/>
            <person name="Hedblom E."/>
            <person name="Cotton M.D."/>
            <person name="Utterback T.R."/>
            <person name="Hanna M.C."/>
            <person name="Nguyen D.T."/>
            <person name="Saudek D.M."/>
            <person name="Brandon R.C."/>
            <person name="Fine L.D."/>
            <person name="Fritchman J.L."/>
            <person name="Fuhrmann J.L."/>
            <person name="Geoghagen N.S.M."/>
            <person name="Gnehm C.L."/>
            <person name="McDonald L.A."/>
            <person name="Small K.V."/>
            <person name="Fraser C.M."/>
            <person name="Smith H.O."/>
            <person name="Venter J.C."/>
        </authorList>
    </citation>
    <scope>NUCLEOTIDE SEQUENCE [LARGE SCALE GENOMIC DNA]</scope>
    <source>
        <strain>ATCC 51907 / DSM 11121 / KW20 / Rd</strain>
    </source>
</reference>
<proteinExistence type="inferred from homology"/>
<name>PGPB_HAEIN</name>